<organism>
    <name type="scientific">Rhizorhabdus wittichii (strain DSM 6014 / CCUG 31198 / JCM 15750 / NBRC 105917 / EY 4224 / RW1)</name>
    <name type="common">Sphingomonas wittichii</name>
    <dbReference type="NCBI Taxonomy" id="392499"/>
    <lineage>
        <taxon>Bacteria</taxon>
        <taxon>Pseudomonadati</taxon>
        <taxon>Pseudomonadota</taxon>
        <taxon>Alphaproteobacteria</taxon>
        <taxon>Sphingomonadales</taxon>
        <taxon>Sphingomonadaceae</taxon>
        <taxon>Rhizorhabdus</taxon>
    </lineage>
</organism>
<dbReference type="EMBL" id="CP000699">
    <property type="protein sequence ID" value="ABQ66767.1"/>
    <property type="molecule type" value="Genomic_DNA"/>
</dbReference>
<dbReference type="SMR" id="A5V3A1"/>
<dbReference type="STRING" id="392499.Swit_0399"/>
<dbReference type="PaxDb" id="392499-Swit_0399"/>
<dbReference type="KEGG" id="swi:Swit_0399"/>
<dbReference type="eggNOG" id="COG1660">
    <property type="taxonomic scope" value="Bacteria"/>
</dbReference>
<dbReference type="HOGENOM" id="CLU_059558_0_0_5"/>
<dbReference type="OrthoDB" id="9784461at2"/>
<dbReference type="Proteomes" id="UP000001989">
    <property type="component" value="Chromosome"/>
</dbReference>
<dbReference type="GO" id="GO:0005524">
    <property type="term" value="F:ATP binding"/>
    <property type="evidence" value="ECO:0007669"/>
    <property type="project" value="UniProtKB-UniRule"/>
</dbReference>
<dbReference type="GO" id="GO:0005525">
    <property type="term" value="F:GTP binding"/>
    <property type="evidence" value="ECO:0007669"/>
    <property type="project" value="UniProtKB-UniRule"/>
</dbReference>
<dbReference type="HAMAP" id="MF_00636">
    <property type="entry name" value="RapZ_like"/>
    <property type="match status" value="1"/>
</dbReference>
<dbReference type="InterPro" id="IPR027417">
    <property type="entry name" value="P-loop_NTPase"/>
</dbReference>
<dbReference type="InterPro" id="IPR005337">
    <property type="entry name" value="RapZ-like"/>
</dbReference>
<dbReference type="InterPro" id="IPR053930">
    <property type="entry name" value="RapZ-like_N"/>
</dbReference>
<dbReference type="InterPro" id="IPR053931">
    <property type="entry name" value="RapZ_C"/>
</dbReference>
<dbReference type="NCBIfam" id="NF003828">
    <property type="entry name" value="PRK05416.1"/>
    <property type="match status" value="1"/>
</dbReference>
<dbReference type="PANTHER" id="PTHR30448">
    <property type="entry name" value="RNASE ADAPTER PROTEIN RAPZ"/>
    <property type="match status" value="1"/>
</dbReference>
<dbReference type="PANTHER" id="PTHR30448:SF0">
    <property type="entry name" value="RNASE ADAPTER PROTEIN RAPZ"/>
    <property type="match status" value="1"/>
</dbReference>
<dbReference type="Pfam" id="PF22740">
    <property type="entry name" value="PapZ_C"/>
    <property type="match status" value="1"/>
</dbReference>
<dbReference type="Pfam" id="PF03668">
    <property type="entry name" value="RapZ-like_N"/>
    <property type="match status" value="1"/>
</dbReference>
<dbReference type="PIRSF" id="PIRSF005052">
    <property type="entry name" value="P-loopkin"/>
    <property type="match status" value="1"/>
</dbReference>
<dbReference type="SUPFAM" id="SSF52540">
    <property type="entry name" value="P-loop containing nucleoside triphosphate hydrolases"/>
    <property type="match status" value="1"/>
</dbReference>
<evidence type="ECO:0000255" key="1">
    <source>
        <dbReference type="HAMAP-Rule" id="MF_00636"/>
    </source>
</evidence>
<evidence type="ECO:0000256" key="2">
    <source>
        <dbReference type="SAM" id="MobiDB-lite"/>
    </source>
</evidence>
<feature type="chain" id="PRO_0000383289" description="Nucleotide-binding protein Swit_0399">
    <location>
        <begin position="1"/>
        <end position="313"/>
    </location>
</feature>
<feature type="region of interest" description="Disordered" evidence="2">
    <location>
        <begin position="289"/>
        <end position="313"/>
    </location>
</feature>
<feature type="compositionally biased region" description="Basic and acidic residues" evidence="2">
    <location>
        <begin position="292"/>
        <end position="303"/>
    </location>
</feature>
<feature type="binding site" evidence="1">
    <location>
        <begin position="20"/>
        <end position="27"/>
    </location>
    <ligand>
        <name>ATP</name>
        <dbReference type="ChEBI" id="CHEBI:30616"/>
    </ligand>
</feature>
<feature type="binding site" evidence="1">
    <location>
        <begin position="73"/>
        <end position="76"/>
    </location>
    <ligand>
        <name>GTP</name>
        <dbReference type="ChEBI" id="CHEBI:37565"/>
    </ligand>
</feature>
<protein>
    <recommendedName>
        <fullName evidence="1">Nucleotide-binding protein Swit_0399</fullName>
    </recommendedName>
</protein>
<keyword id="KW-0067">ATP-binding</keyword>
<keyword id="KW-0342">GTP-binding</keyword>
<keyword id="KW-0547">Nucleotide-binding</keyword>
<keyword id="KW-1185">Reference proteome</keyword>
<reference key="1">
    <citation type="journal article" date="2010" name="J. Bacteriol.">
        <title>Genome sequence of the dioxin-mineralizing bacterium Sphingomonas wittichii RW1.</title>
        <authorList>
            <person name="Miller T.R."/>
            <person name="Delcher A.L."/>
            <person name="Salzberg S.L."/>
            <person name="Saunders E."/>
            <person name="Detter J.C."/>
            <person name="Halden R.U."/>
        </authorList>
    </citation>
    <scope>NUCLEOTIDE SEQUENCE [LARGE SCALE GENOMIC DNA]</scope>
    <source>
        <strain>DSM 6014 / CCUG 31198 / JCM 15750 / NBRC 105917 / EY 4224 / RW1</strain>
    </source>
</reference>
<comment type="function">
    <text evidence="1">Displays ATPase and GTPase activities.</text>
</comment>
<comment type="similarity">
    <text evidence="1">Belongs to the RapZ-like family.</text>
</comment>
<name>Y399_RHIWR</name>
<gene>
    <name type="ordered locus">Swit_0399</name>
</gene>
<accession>A5V3A1</accession>
<sequence length="313" mass="34621">MTKAGMTKAGEPRRILFVTGMSGSGKKTALTALEDMGWETVDNLPVSLLERLLAASPAEGSIDEGRPLALGIDSRTRDFDSRGVVRRVRSLRDGGRDASILFFDCSNTELSRRYSETRARHPLARDRQVEDGISYERELLAPLREAADELIDTTDSSTNELQALLRRRFGDSAGTGTTLTVMSFAFSRGVPRDADLMFDMRFLRNPHWVPELKPHSGLDPDVGAYIAGDPIYPEARARIEELILLLLPRYETEGKSYVTIAIGCTGGKHRSVHFAETLASRLRQEGFSPTVRHRDLTRQKSNAEESTVPGVGS</sequence>
<proteinExistence type="inferred from homology"/>